<keyword id="KW-0256">Endoplasmic reticulum</keyword>
<keyword id="KW-0349">Heme</keyword>
<keyword id="KW-0408">Iron</keyword>
<keyword id="KW-0472">Membrane</keyword>
<keyword id="KW-0479">Metal-binding</keyword>
<keyword id="KW-0492">Microsome</keyword>
<keyword id="KW-0503">Monooxygenase</keyword>
<keyword id="KW-0560">Oxidoreductase</keyword>
<keyword id="KW-1185">Reference proteome</keyword>
<protein>
    <recommendedName>
        <fullName>Cytochrome P450 2F3</fullName>
        <ecNumber>1.14.14.1</ecNumber>
    </recommendedName>
    <alternativeName>
        <fullName>CYPIIF3</fullName>
    </alternativeName>
</protein>
<accession>O18809</accession>
<name>CP2F3_CAPHI</name>
<dbReference type="EC" id="1.14.14.1"/>
<dbReference type="EMBL" id="AF016293">
    <property type="protein sequence ID" value="AAB81719.1"/>
    <property type="molecule type" value="mRNA"/>
</dbReference>
<dbReference type="RefSeq" id="NP_001274499.1">
    <property type="nucleotide sequence ID" value="NM_001287570.1"/>
</dbReference>
<dbReference type="SMR" id="O18809"/>
<dbReference type="STRING" id="9925.ENSCHIP00000012667"/>
<dbReference type="GeneID" id="102191547"/>
<dbReference type="KEGG" id="chx:102191547"/>
<dbReference type="CTD" id="102191547"/>
<dbReference type="OrthoDB" id="1055148at2759"/>
<dbReference type="Proteomes" id="UP000291000">
    <property type="component" value="Unassembled WGS sequence"/>
</dbReference>
<dbReference type="Proteomes" id="UP000694566">
    <property type="component" value="Unplaced"/>
</dbReference>
<dbReference type="GO" id="GO:0005789">
    <property type="term" value="C:endoplasmic reticulum membrane"/>
    <property type="evidence" value="ECO:0007669"/>
    <property type="project" value="UniProtKB-SubCell"/>
</dbReference>
<dbReference type="GO" id="GO:0008392">
    <property type="term" value="F:arachidonate epoxygenase activity"/>
    <property type="evidence" value="ECO:0007669"/>
    <property type="project" value="TreeGrafter"/>
</dbReference>
<dbReference type="GO" id="GO:0020037">
    <property type="term" value="F:heme binding"/>
    <property type="evidence" value="ECO:0007669"/>
    <property type="project" value="InterPro"/>
</dbReference>
<dbReference type="GO" id="GO:0005506">
    <property type="term" value="F:iron ion binding"/>
    <property type="evidence" value="ECO:0007669"/>
    <property type="project" value="InterPro"/>
</dbReference>
<dbReference type="GO" id="GO:0016712">
    <property type="term" value="F:oxidoreductase activity, acting on paired donors, with incorporation or reduction of molecular oxygen, reduced flavin or flavoprotein as one donor, and incorporation of one atom of oxygen"/>
    <property type="evidence" value="ECO:0007669"/>
    <property type="project" value="UniProtKB-EC"/>
</dbReference>
<dbReference type="GO" id="GO:0019825">
    <property type="term" value="F:oxygen binding"/>
    <property type="evidence" value="ECO:0007669"/>
    <property type="project" value="InterPro"/>
</dbReference>
<dbReference type="GO" id="GO:0019373">
    <property type="term" value="P:epoxygenase P450 pathway"/>
    <property type="evidence" value="ECO:0007669"/>
    <property type="project" value="TreeGrafter"/>
</dbReference>
<dbReference type="GO" id="GO:0006805">
    <property type="term" value="P:xenobiotic metabolic process"/>
    <property type="evidence" value="ECO:0007669"/>
    <property type="project" value="TreeGrafter"/>
</dbReference>
<dbReference type="CDD" id="cd20669">
    <property type="entry name" value="Cyp2F"/>
    <property type="match status" value="1"/>
</dbReference>
<dbReference type="FunFam" id="1.10.630.10:FF:000001">
    <property type="entry name" value="Cytochrome P450, family 2"/>
    <property type="match status" value="1"/>
</dbReference>
<dbReference type="Gene3D" id="1.10.630.10">
    <property type="entry name" value="Cytochrome P450"/>
    <property type="match status" value="1"/>
</dbReference>
<dbReference type="InterPro" id="IPR001128">
    <property type="entry name" value="Cyt_P450"/>
</dbReference>
<dbReference type="InterPro" id="IPR017972">
    <property type="entry name" value="Cyt_P450_CS"/>
</dbReference>
<dbReference type="InterPro" id="IPR020469">
    <property type="entry name" value="Cyt_P450_CYP2_fam"/>
</dbReference>
<dbReference type="InterPro" id="IPR002401">
    <property type="entry name" value="Cyt_P450_E_grp-I"/>
</dbReference>
<dbReference type="InterPro" id="IPR036396">
    <property type="entry name" value="Cyt_P450_sf"/>
</dbReference>
<dbReference type="InterPro" id="IPR050182">
    <property type="entry name" value="Cytochrome_P450_fam2"/>
</dbReference>
<dbReference type="PANTHER" id="PTHR24300:SF275">
    <property type="entry name" value="CYTOCHROME P450 2F1"/>
    <property type="match status" value="1"/>
</dbReference>
<dbReference type="PANTHER" id="PTHR24300">
    <property type="entry name" value="CYTOCHROME P450 508A4-RELATED"/>
    <property type="match status" value="1"/>
</dbReference>
<dbReference type="Pfam" id="PF00067">
    <property type="entry name" value="p450"/>
    <property type="match status" value="1"/>
</dbReference>
<dbReference type="PRINTS" id="PR00463">
    <property type="entry name" value="EP450I"/>
</dbReference>
<dbReference type="PRINTS" id="PR01957">
    <property type="entry name" value="EP450ICYP2F"/>
</dbReference>
<dbReference type="PRINTS" id="PR00385">
    <property type="entry name" value="P450"/>
</dbReference>
<dbReference type="SUPFAM" id="SSF48264">
    <property type="entry name" value="Cytochrome P450"/>
    <property type="match status" value="1"/>
</dbReference>
<dbReference type="PROSITE" id="PS00086">
    <property type="entry name" value="CYTOCHROME_P450"/>
    <property type="match status" value="1"/>
</dbReference>
<proteinExistence type="evidence at transcript level"/>
<sequence>MDSISTAILLLILALICLLLTTSSKGKGRLPPGPRALPFLGNLLQLRSQDMLTSLTKLSKEFGAVYTVYLGPRRVVVLSGYQAVKEALVDQAEEFSGRGDYPAFFNFTKGNGIAFSNGDRWKALRKYSLQILRNFGMGKRTIEERILEEGHFLLEELRKTQGKPFDPTFVVSRSVSNIICSVIFGSRFDYDDDRLLTIIHLINENFQIMSSPWGEMYNIFPNLLDWVPGPHRRLFKNYGRMKNLIARSVREHQASLDPNSPRDFIDCFLTKMAQEKQDPLSHFFMDTLLMTTHNLLFGGTETVGTTLRHAFRLLMKYPEVQVRVQEEIDRVVGRERLPTVEDRAEMPYTDAVIHEVQRFADIIPMSLPHRVTRDTNFRGFTIPRGTDVITLLNTVHYDPSQFLKPKEFNPEHFLDANMSFKKSPAFMPFSAGRRLCLGEALARMELFLYLTAILQSFSLQPLGAPEDIDLTPLSSGLGNVPRPYQLCVRAR</sequence>
<feature type="chain" id="PRO_0000051762" description="Cytochrome P450 2F3">
    <location>
        <begin position="1"/>
        <end position="491"/>
    </location>
</feature>
<feature type="binding site" description="axial binding residue" evidence="1">
    <location>
        <position position="436"/>
    </location>
    <ligand>
        <name>heme</name>
        <dbReference type="ChEBI" id="CHEBI:30413"/>
    </ligand>
    <ligandPart>
        <name>Fe</name>
        <dbReference type="ChEBI" id="CHEBI:18248"/>
    </ligandPart>
</feature>
<organism>
    <name type="scientific">Capra hircus</name>
    <name type="common">Goat</name>
    <dbReference type="NCBI Taxonomy" id="9925"/>
    <lineage>
        <taxon>Eukaryota</taxon>
        <taxon>Metazoa</taxon>
        <taxon>Chordata</taxon>
        <taxon>Craniata</taxon>
        <taxon>Vertebrata</taxon>
        <taxon>Euteleostomi</taxon>
        <taxon>Mammalia</taxon>
        <taxon>Eutheria</taxon>
        <taxon>Laurasiatheria</taxon>
        <taxon>Artiodactyla</taxon>
        <taxon>Ruminantia</taxon>
        <taxon>Pecora</taxon>
        <taxon>Bovidae</taxon>
        <taxon>Caprinae</taxon>
        <taxon>Capra</taxon>
    </lineage>
</organism>
<gene>
    <name type="primary">CYP2F3</name>
</gene>
<reference key="1">
    <citation type="journal article" date="1998" name="Arch. Biochem. Biophys.">
        <title>Cloning and expression of CYP2F3, a cytochrome P450 that bioactivates the selective pneumotoxins 3-methylindole and naphthalene.</title>
        <authorList>
            <person name="Wang H."/>
            <person name="Lanza D.L."/>
            <person name="Yost G.S."/>
        </authorList>
    </citation>
    <scope>NUCLEOTIDE SEQUENCE [MRNA]</scope>
    <source>
        <tissue>Lung</tissue>
    </source>
</reference>
<comment type="function">
    <text>Bioactivates 3-methylindole (3MI) by dehydrogenation to the putative electrophile 3-methylene-indolenine. Stereoselectively catalyzes the formation of the 1R,2S-oxide from naphthalene. Lack activity with other common P450 substrates including 7-ethoxycoumarin.</text>
</comment>
<comment type="catalytic activity">
    <reaction>
        <text>an organic molecule + reduced [NADPH--hemoprotein reductase] + O2 = an alcohol + oxidized [NADPH--hemoprotein reductase] + H2O + H(+)</text>
        <dbReference type="Rhea" id="RHEA:17149"/>
        <dbReference type="Rhea" id="RHEA-COMP:11964"/>
        <dbReference type="Rhea" id="RHEA-COMP:11965"/>
        <dbReference type="ChEBI" id="CHEBI:15377"/>
        <dbReference type="ChEBI" id="CHEBI:15378"/>
        <dbReference type="ChEBI" id="CHEBI:15379"/>
        <dbReference type="ChEBI" id="CHEBI:30879"/>
        <dbReference type="ChEBI" id="CHEBI:57618"/>
        <dbReference type="ChEBI" id="CHEBI:58210"/>
        <dbReference type="ChEBI" id="CHEBI:142491"/>
        <dbReference type="EC" id="1.14.14.1"/>
    </reaction>
</comment>
<comment type="cofactor">
    <cofactor evidence="1">
        <name>heme</name>
        <dbReference type="ChEBI" id="CHEBI:30413"/>
    </cofactor>
</comment>
<comment type="subcellular location">
    <subcellularLocation>
        <location>Endoplasmic reticulum membrane</location>
        <topology>Peripheral membrane protein</topology>
    </subcellularLocation>
    <subcellularLocation>
        <location>Microsome membrane</location>
        <topology>Peripheral membrane protein</topology>
    </subcellularLocation>
</comment>
<comment type="tissue specificity">
    <text>Lung specific.</text>
</comment>
<comment type="similarity">
    <text evidence="2">Belongs to the cytochrome P450 family.</text>
</comment>
<evidence type="ECO:0000250" key="1"/>
<evidence type="ECO:0000305" key="2"/>